<keyword id="KW-0878">Amphibian defense peptide</keyword>
<keyword id="KW-0044">Antibiotic</keyword>
<keyword id="KW-0929">Antimicrobial</keyword>
<keyword id="KW-0165">Cleavage on pair of basic residues</keyword>
<keyword id="KW-0903">Direct protein sequencing</keyword>
<keyword id="KW-1015">Disulfide bond</keyword>
<keyword id="KW-0295">Fungicide</keyword>
<keyword id="KW-0391">Immunity</keyword>
<keyword id="KW-0399">Innate immunity</keyword>
<keyword id="KW-0964">Secreted</keyword>
<keyword id="KW-0732">Signal</keyword>
<protein>
    <recommendedName>
        <fullName evidence="3">Esculentin-2-ALa</fullName>
    </recommendedName>
    <alternativeName>
        <fullName evidence="6">Amolopin-9a</fullName>
    </alternativeName>
</protein>
<reference key="1">
    <citation type="journal article" date="2010" name="Comp. Biochem. Physiol.">
        <title>Five novel antimicrobial peptides from skin secretions of the frog, Amolops loloensis.</title>
        <authorList>
            <person name="Wang M."/>
            <person name="Wang Y."/>
            <person name="Wang A."/>
            <person name="Song Y."/>
            <person name="Ma D."/>
            <person name="Yang H."/>
            <person name="Ma Y."/>
            <person name="Lai R."/>
        </authorList>
    </citation>
    <scope>NUCLEOTIDE SEQUENCE [MRNA]</scope>
    <scope>PROTEIN SEQUENCE OF 40-76</scope>
    <scope>FUNCTION</scope>
    <scope>MASS SPECTROMETRY</scope>
    <scope>DISULFIDE BOND</scope>
    <scope>SUBCELLULAR LOCATION</scope>
    <source>
        <tissue>Skin</tissue>
        <tissue>Skin secretion</tissue>
    </source>
</reference>
<feature type="signal peptide" evidence="1">
    <location>
        <begin position="1"/>
        <end position="22"/>
    </location>
</feature>
<feature type="propeptide" id="PRO_0000450001" evidence="5">
    <location>
        <begin position="23"/>
        <end position="39"/>
    </location>
</feature>
<feature type="peptide" id="PRO_5002950813" description="Esculentin-2-ALa" evidence="2">
    <location>
        <begin position="40"/>
        <end position="76"/>
    </location>
</feature>
<feature type="disulfide bond" evidence="2">
    <location>
        <begin position="70"/>
        <end position="76"/>
    </location>
</feature>
<name>E2ALA_AMOLO</name>
<evidence type="ECO:0000255" key="1"/>
<evidence type="ECO:0000269" key="2">
    <source>
    </source>
</evidence>
<evidence type="ECO:0000303" key="3">
    <source>
    </source>
</evidence>
<evidence type="ECO:0000305" key="4"/>
<evidence type="ECO:0000305" key="5">
    <source>
    </source>
</evidence>
<evidence type="ECO:0000312" key="6">
    <source>
        <dbReference type="EMBL" id="ACA09637.1"/>
    </source>
</evidence>
<sequence length="76" mass="8390">MFTLKKSMLLLFFLGTISLSLCEEERNADEDDGEKEVKRGIFALIKTAAKFVGKNLLKQAGKAGLEHLACKANNQC</sequence>
<organism>
    <name type="scientific">Amolops loloensis</name>
    <name type="common">Lolokou Sucker Frog</name>
    <name type="synonym">Staurois loloensis</name>
    <dbReference type="NCBI Taxonomy" id="318551"/>
    <lineage>
        <taxon>Eukaryota</taxon>
        <taxon>Metazoa</taxon>
        <taxon>Chordata</taxon>
        <taxon>Craniata</taxon>
        <taxon>Vertebrata</taxon>
        <taxon>Euteleostomi</taxon>
        <taxon>Amphibia</taxon>
        <taxon>Batrachia</taxon>
        <taxon>Anura</taxon>
        <taxon>Neobatrachia</taxon>
        <taxon>Ranoidea</taxon>
        <taxon>Ranidae</taxon>
        <taxon>Amolops</taxon>
    </lineage>
</organism>
<comment type="function">
    <text evidence="2">Antimicrobial peptide with activity against Gram-positive and Gram-negative bacteria and against fungi (PubMed:19843479). Has been tested against S.aureus (MIC=2.5 ug/mL), B.pumilus (MIC=2.5 ug/mL), B.cereus (MIC=7.5 ug/mL), E.coli (MIC=12.5 ug/mL), B.dysenteriae (MIC=7.5 ug/mL), A.cacoaceticus (MIC=25.0 ug/mL), P.aeruginosa (MIC=50.0 ug/mL) and C.albicans (MIC=2.5 ug/mL) (PubMed:19843479). Also shows a weak hemolytic activity (PubMed:19843479).</text>
</comment>
<comment type="subcellular location">
    <subcellularLocation>
        <location evidence="2">Secreted</location>
    </subcellularLocation>
</comment>
<comment type="tissue specificity">
    <text evidence="5">Expressed by the skin glands.</text>
</comment>
<comment type="mass spectrometry" mass="3866.42" method="MALDI" evidence="2"/>
<comment type="similarity">
    <text evidence="4">Belongs to the frog skin active peptide (FSAP) family. Esculentin subfamily.</text>
</comment>
<comment type="online information" name="The antimicrobial peptide database">
    <link uri="https://wangapd3.com/database/query_output.php?ID=01929"/>
</comment>
<dbReference type="EMBL" id="EU311547">
    <property type="protein sequence ID" value="ACA09637.1"/>
    <property type="molecule type" value="mRNA"/>
</dbReference>
<dbReference type="SMR" id="C5H0D4"/>
<dbReference type="GO" id="GO:0005576">
    <property type="term" value="C:extracellular region"/>
    <property type="evidence" value="ECO:0007669"/>
    <property type="project" value="UniProtKB-SubCell"/>
</dbReference>
<dbReference type="GO" id="GO:0042742">
    <property type="term" value="P:defense response to bacterium"/>
    <property type="evidence" value="ECO:0007669"/>
    <property type="project" value="UniProtKB-KW"/>
</dbReference>
<dbReference type="GO" id="GO:0050832">
    <property type="term" value="P:defense response to fungus"/>
    <property type="evidence" value="ECO:0007669"/>
    <property type="project" value="UniProtKB-KW"/>
</dbReference>
<dbReference type="GO" id="GO:0045087">
    <property type="term" value="P:innate immune response"/>
    <property type="evidence" value="ECO:0007669"/>
    <property type="project" value="UniProtKB-KW"/>
</dbReference>
<dbReference type="GO" id="GO:0031640">
    <property type="term" value="P:killing of cells of another organism"/>
    <property type="evidence" value="ECO:0007669"/>
    <property type="project" value="UniProtKB-KW"/>
</dbReference>
<dbReference type="InterPro" id="IPR004275">
    <property type="entry name" value="Frog_antimicrobial_propeptide"/>
</dbReference>
<dbReference type="Pfam" id="PF03032">
    <property type="entry name" value="FSAP_sig_propep"/>
    <property type="match status" value="1"/>
</dbReference>
<accession>C5H0D4</accession>
<proteinExistence type="evidence at protein level"/>